<reference key="1">
    <citation type="submission" date="1996-11" db="EMBL/GenBank/DDBJ databases">
        <authorList>
            <person name="Summers R.G."/>
            <person name="Staver M.J."/>
            <person name="Donadio S."/>
            <person name="Wendt-Pienkowski E."/>
            <person name="Hutchinson C.R."/>
            <person name="Katz L."/>
        </authorList>
    </citation>
    <scope>NUCLEOTIDE SEQUENCE [GENOMIC DNA]</scope>
    <source>
        <strain>NRRL 2338</strain>
    </source>
</reference>
<reference key="2">
    <citation type="journal article" date="1997" name="Microbiology">
        <title>Sequencing and mutagenesis of genes from the erythromycin biosynthetic gene cluster of Saccharopolyspora erythraea that are involved in L-mycarose and D-desosamine production.</title>
        <authorList>
            <person name="Summers R.G."/>
            <person name="Donadio S."/>
            <person name="Staver M.J."/>
            <person name="Wendt-Pienkowski E."/>
            <person name="Hutchinson C.R."/>
            <person name="Katz L."/>
        </authorList>
    </citation>
    <scope>NUCLEOTIDE SEQUENCE [GENOMIC DNA]</scope>
    <scope>FUNCTION</scope>
    <source>
        <strain>NRRL 2338</strain>
    </source>
</reference>
<reference key="3">
    <citation type="journal article" date="1997" name="Mol. Gen. Genet.">
        <title>Analysis of seven genes from the eryAI-eryK region of the erythromycin biosynthetic gene cluster in Saccharopolyspora erythraea.</title>
        <authorList>
            <person name="Gaisser S."/>
            <person name="Bohm G.A."/>
            <person name="Cortes J."/>
            <person name="Leadlay P.F."/>
        </authorList>
    </citation>
    <scope>NUCLEOTIDE SEQUENCE [GENOMIC DNA]</scope>
    <source>
        <strain>NRRL2338</strain>
    </source>
</reference>
<reference key="4">
    <citation type="journal article" date="2007" name="ChemBioChem">
        <title>The in vitro characterization of the erythronolide mycarosyltransferase EryBV and its utility in macrolide diversification.</title>
        <authorList>
            <person name="Zhang C."/>
            <person name="Fu Q."/>
            <person name="Albermann C."/>
            <person name="Li L."/>
            <person name="Thorson J.S."/>
        </authorList>
    </citation>
    <scope>FUNCTION</scope>
    <scope>CATALYTIC ACTIVITY</scope>
    <scope>SUBSTRATE SPECIFICITY</scope>
</reference>
<sequence>MRVLLTSFAHRTHFQGLVPLAWALRTAGHDVRVAAQPALTDAVIGAGLTAVPVGSDHRLFDIVPEVAAQVHRYSFYLDFYHREQELHSWEFLLGMQEATSRWVYPVVNNDSFVAELVDFARDWRPDLVLWEPFTFAGAVAARACGAAHARLLWGSDLTGYFRGRFQAQRLRRPPEDRPDPLGTWLTEVAGRFGVEFGEDLAVGQWSVDQLPPSFRLDTGMETVVARTLPYNGASVVPDWLKKGSATRRICITGGFSGLGLAADADQFARTLAQLARFDGEIVVTGSGPDTSAVPDNIRLVDFVPMGVLLQNCAAIIHHGGAGTWATALHHGIPQISVAHEWDCMLRGQQTAELGAGIYLRPDEVDADSLASALTQVVEDPTYTENAVKLREEALSDPTPQEIVPRLEELTRRHAG</sequence>
<organism>
    <name type="scientific">Saccharopolyspora erythraea</name>
    <name type="common">Streptomyces erythraeus</name>
    <dbReference type="NCBI Taxonomy" id="1836"/>
    <lineage>
        <taxon>Bacteria</taxon>
        <taxon>Bacillati</taxon>
        <taxon>Actinomycetota</taxon>
        <taxon>Actinomycetes</taxon>
        <taxon>Pseudonocardiales</taxon>
        <taxon>Pseudonocardiaceae</taxon>
        <taxon>Saccharopolyspora</taxon>
    </lineage>
</organism>
<comment type="function">
    <text evidence="1 2">Involved in the biosynthesis of the macrolide antibiotic erythromycin. Catalyzes the reversible transfer of mycarosyl from dTDP-beta-L-mycarose to erythronolide B to yield 3-alpha-L-mycarosylerythronolide B. It can also use TDP-beta-L-cladinose.</text>
</comment>
<comment type="catalytic activity">
    <reaction evidence="1">
        <text>dTDP-beta-L-mycarose + erythronolide B = 3-O-alpha-L-mycarosylerythronolide B + dTDP + H(+)</text>
        <dbReference type="Rhea" id="RHEA:41576"/>
        <dbReference type="ChEBI" id="CHEBI:15378"/>
        <dbReference type="ChEBI" id="CHEBI:27977"/>
        <dbReference type="ChEBI" id="CHEBI:28343"/>
        <dbReference type="ChEBI" id="CHEBI:58369"/>
        <dbReference type="ChEBI" id="CHEBI:76814"/>
        <dbReference type="EC" id="2.4.1.328"/>
    </reaction>
</comment>
<comment type="miscellaneous">
    <text evidence="4">It does not require an auxiliary activator protein.</text>
</comment>
<comment type="similarity">
    <text evidence="3">Belongs to the glycosyltransferase 28 family.</text>
</comment>
<feature type="chain" id="PRO_0000430759" description="Erythronolide mycarosyltransferase">
    <location>
        <begin position="1"/>
        <end position="415"/>
    </location>
</feature>
<name>ERYBV_SACER</name>
<protein>
    <recommendedName>
        <fullName evidence="2">Erythronolide mycarosyltransferase</fullName>
        <ecNumber evidence="1">2.4.1.328</ecNumber>
    </recommendedName>
</protein>
<evidence type="ECO:0000269" key="1">
    <source>
    </source>
</evidence>
<evidence type="ECO:0000303" key="2">
    <source>
    </source>
</evidence>
<evidence type="ECO:0000305" key="3"/>
<evidence type="ECO:0000305" key="4">
    <source>
    </source>
</evidence>
<keyword id="KW-0045">Antibiotic biosynthesis</keyword>
<keyword id="KW-0328">Glycosyltransferase</keyword>
<keyword id="KW-0808">Transferase</keyword>
<gene>
    <name evidence="2" type="primary">eryBV</name>
</gene>
<proteinExistence type="evidence at protein level"/>
<accession>O33939</accession>
<dbReference type="EC" id="2.4.1.328" evidence="1"/>
<dbReference type="EMBL" id="U77459">
    <property type="protein sequence ID" value="AAB84072.1"/>
    <property type="molecule type" value="Genomic_DNA"/>
</dbReference>
<dbReference type="EMBL" id="Y11199">
    <property type="protein sequence ID" value="CAA72081.1"/>
    <property type="molecule type" value="Genomic_DNA"/>
</dbReference>
<dbReference type="RefSeq" id="WP_009950885.1">
    <property type="nucleotide sequence ID" value="NZ_JABNNH010000002.1"/>
</dbReference>
<dbReference type="SMR" id="O33939"/>
<dbReference type="CAZy" id="GT1">
    <property type="family name" value="Glycosyltransferase Family 1"/>
</dbReference>
<dbReference type="OMA" id="RWWKPDL"/>
<dbReference type="GO" id="GO:0016758">
    <property type="term" value="F:hexosyltransferase activity"/>
    <property type="evidence" value="ECO:0007669"/>
    <property type="project" value="UniProtKB-ARBA"/>
</dbReference>
<dbReference type="GO" id="GO:0008194">
    <property type="term" value="F:UDP-glycosyltransferase activity"/>
    <property type="evidence" value="ECO:0007669"/>
    <property type="project" value="InterPro"/>
</dbReference>
<dbReference type="GO" id="GO:0017000">
    <property type="term" value="P:antibiotic biosynthetic process"/>
    <property type="evidence" value="ECO:0007669"/>
    <property type="project" value="UniProtKB-KW"/>
</dbReference>
<dbReference type="CDD" id="cd03784">
    <property type="entry name" value="GT1_Gtf-like"/>
    <property type="match status" value="1"/>
</dbReference>
<dbReference type="FunFam" id="3.40.50.2000:FF:000072">
    <property type="entry name" value="Glycosyl transferase"/>
    <property type="match status" value="1"/>
</dbReference>
<dbReference type="Gene3D" id="3.40.50.2000">
    <property type="entry name" value="Glycogen Phosphorylase B"/>
    <property type="match status" value="2"/>
</dbReference>
<dbReference type="InterPro" id="IPR010610">
    <property type="entry name" value="EryCIII-like_C"/>
</dbReference>
<dbReference type="InterPro" id="IPR048284">
    <property type="entry name" value="EryCIII-like_N"/>
</dbReference>
<dbReference type="InterPro" id="IPR030953">
    <property type="entry name" value="Glycosyl_450act"/>
</dbReference>
<dbReference type="InterPro" id="IPR050426">
    <property type="entry name" value="Glycosyltransferase_28"/>
</dbReference>
<dbReference type="InterPro" id="IPR002213">
    <property type="entry name" value="UDP_glucos_trans"/>
</dbReference>
<dbReference type="NCBIfam" id="TIGR04516">
    <property type="entry name" value="glycosyl_450act"/>
    <property type="match status" value="1"/>
</dbReference>
<dbReference type="PANTHER" id="PTHR48050">
    <property type="entry name" value="STEROL 3-BETA-GLUCOSYLTRANSFERASE"/>
    <property type="match status" value="1"/>
</dbReference>
<dbReference type="PANTHER" id="PTHR48050:SF13">
    <property type="entry name" value="STEROL 3-BETA-GLUCOSYLTRANSFERASE UGT80A2"/>
    <property type="match status" value="1"/>
</dbReference>
<dbReference type="Pfam" id="PF06722">
    <property type="entry name" value="EryCIII-like_C"/>
    <property type="match status" value="1"/>
</dbReference>
<dbReference type="Pfam" id="PF21036">
    <property type="entry name" value="EryCIII-like_N"/>
    <property type="match status" value="1"/>
</dbReference>
<dbReference type="SUPFAM" id="SSF53756">
    <property type="entry name" value="UDP-Glycosyltransferase/glycogen phosphorylase"/>
    <property type="match status" value="1"/>
</dbReference>